<reference key="1">
    <citation type="submission" date="1999-06" db="EMBL/GenBank/DDBJ databases">
        <authorList>
            <person name="Laessing U."/>
        </authorList>
    </citation>
    <scope>NUCLEOTIDE SEQUENCE [MRNA]</scope>
    <source>
        <tissue>Retina</tissue>
    </source>
</reference>
<reference key="2">
    <citation type="journal article" date="1994" name="Differentiation">
        <title>Molecular characterization of fish neurolin: a growth-associated cell surface protein and member of the immunoglobulin superfamily in the fish retinotectal system with similarities to chick protein DM-GRASP/SC-1/BEN.</title>
        <authorList>
            <person name="Laessing U."/>
            <person name="Giordano S."/>
            <person name="Stecher B."/>
            <person name="Lottspeich F."/>
            <person name="Stuermer C.A.O."/>
        </authorList>
    </citation>
    <scope>NUCLEOTIDE SEQUENCE [MRNA] OF 30-552</scope>
    <scope>PARTIAL PROTEIN SEQUENCE</scope>
    <source>
        <tissue>Retina</tissue>
    </source>
</reference>
<accession>Q90304</accession>
<feature type="signal peptide" evidence="4">
    <location>
        <begin position="1"/>
        <end position="22"/>
    </location>
</feature>
<feature type="chain" id="PRO_0000014664" description="CD166 antigen homolog">
    <location>
        <begin position="23"/>
        <end position="555"/>
    </location>
</feature>
<feature type="topological domain" description="Extracellular" evidence="4">
    <location>
        <begin position="23"/>
        <end position="499"/>
    </location>
</feature>
<feature type="transmembrane region" description="Helical" evidence="4">
    <location>
        <begin position="500"/>
        <end position="520"/>
    </location>
</feature>
<feature type="topological domain" description="Cytoplasmic" evidence="4">
    <location>
        <begin position="521"/>
        <end position="555"/>
    </location>
</feature>
<feature type="domain" description="Ig-like V-type 1">
    <location>
        <begin position="23"/>
        <end position="127"/>
    </location>
</feature>
<feature type="domain" description="Ig-like V-type 2">
    <location>
        <begin position="131"/>
        <end position="229"/>
    </location>
</feature>
<feature type="domain" description="Ig-like C2-type 1">
    <location>
        <begin position="239"/>
        <end position="323"/>
    </location>
</feature>
<feature type="domain" description="Ig-like C2-type 2">
    <location>
        <begin position="319"/>
        <end position="397"/>
    </location>
</feature>
<feature type="domain" description="Ig-like C2-type 3">
    <location>
        <begin position="406"/>
        <end position="484"/>
    </location>
</feature>
<feature type="region of interest" description="Disordered" evidence="6">
    <location>
        <begin position="529"/>
        <end position="555"/>
    </location>
</feature>
<feature type="compositionally biased region" description="Basic and acidic residues" evidence="6">
    <location>
        <begin position="532"/>
        <end position="555"/>
    </location>
</feature>
<feature type="glycosylation site" description="N-linked (GlcNAc...) asparagine" evidence="4">
    <location>
        <position position="92"/>
    </location>
</feature>
<feature type="glycosylation site" description="N-linked (GlcNAc...) asparagine" evidence="4">
    <location>
        <position position="171"/>
    </location>
</feature>
<feature type="glycosylation site" description="N-linked (GlcNAc...) asparagine" evidence="4">
    <location>
        <position position="350"/>
    </location>
</feature>
<feature type="glycosylation site" description="N-linked (GlcNAc...) asparagine" evidence="4">
    <location>
        <position position="441"/>
    </location>
</feature>
<feature type="glycosylation site" description="N-linked (GlcNAc...) asparagine" evidence="4">
    <location>
        <position position="465"/>
    </location>
</feature>
<feature type="disulfide bond" evidence="5">
    <location>
        <begin position="38"/>
        <end position="110"/>
    </location>
</feature>
<feature type="disulfide bond" evidence="5">
    <location>
        <begin position="154"/>
        <end position="217"/>
    </location>
</feature>
<feature type="disulfide bond" evidence="5">
    <location>
        <begin position="263"/>
        <end position="306"/>
    </location>
</feature>
<feature type="disulfide bond" evidence="5">
    <location>
        <begin position="426"/>
        <end position="470"/>
    </location>
</feature>
<sequence length="555" mass="60372">MQSVVCLIGAFIAAAVFRPGSCVGTVIGLYGETIVVPCNDGTKKPDGLIFTKWKYVKDDGSPGDLLVKQAQKDEATVSATDGYKSRVSIAANSSLLIARGSLADQRVFTCMVVSFTNLEEYSVEVKVHKKPSAPVIKNNAKELENGKLTQLGECVVENANPPADLIWKKNNQTLVDDGKTIIITSTITKDKITGLSSTSSRLQYTARKEDVESQFTCTAKHVMGPDQVSEPESFPIHYPTEKVSLQVVSQSPIREGEDVTLKCQADGNPPPTSFNFNIKGKKVTVTDKDVYTLTGVTRADSGIYKCSLLDNDVMESTQFVTVSFLDVSLTPTGKVLKNVGENLIVSLDKNASSEAKVTWTKDNRKLDKLPDFSKLTYSDAGLYVCDVSIEGIKRSLSFELTVEGIPKITSLTKHRSSDGKHKVLTCEAEGSPKPDVQWSVNGTNDEVSYNNGKATYKLTVVPSKNLTVSCLVTNKLGEDTKEISVFSQKNEDGTEQAKVIVGIVVGLLVAAALVGLIYWIYIKKTRQGSWKTGEKEAGTSEESKKLEENNHKPDV</sequence>
<gene>
    <name type="primary">alcam</name>
</gene>
<proteinExistence type="evidence at protein level"/>
<protein>
    <recommendedName>
        <fullName>CD166 antigen homolog</fullName>
    </recommendedName>
    <alternativeName>
        <fullName>Activated leukocyte cell adhesion molecule</fullName>
    </alternativeName>
    <alternativeName>
        <fullName>DM-GRASP homolog</fullName>
    </alternativeName>
    <alternativeName>
        <fullName>Neurolin</fullName>
    </alternativeName>
    <cdAntigenName>CD166</cdAntigenName>
</protein>
<evidence type="ECO:0000250" key="1">
    <source>
        <dbReference type="UniProtKB" id="P42292"/>
    </source>
</evidence>
<evidence type="ECO:0000250" key="2">
    <source>
        <dbReference type="UniProtKB" id="Q13740"/>
    </source>
</evidence>
<evidence type="ECO:0000250" key="3">
    <source>
        <dbReference type="UniProtKB" id="Q61490"/>
    </source>
</evidence>
<evidence type="ECO:0000255" key="4"/>
<evidence type="ECO:0000255" key="5">
    <source>
        <dbReference type="PROSITE-ProRule" id="PRU00114"/>
    </source>
</evidence>
<evidence type="ECO:0000256" key="6">
    <source>
        <dbReference type="SAM" id="MobiDB-lite"/>
    </source>
</evidence>
<comment type="function">
    <text evidence="1 2 3">Cell adhesion molecule that mediates both heterotypic cell-cell contacts via its interaction with CD6, as well as homotypic cell-cell contacts. Promotes T-cell activation and proliferation via its interactions with CD6 (By similarity). Contributes to the formation and maturation of the immunological synapse via its interactions with CD6 (By similarity). Mediates homotypic interactions with cells that express ALCAM. Mediates attachment of dendritic cells onto endothelial cells via homotypic interaction. Inhibits endothelial cell migration and promotes endothelial tube formation via homotypic interactions. Required for normal organization of the lymph vessel network. Required for normal hematopoietic stem cell engraftment in the bone marrow. Plays a role in hematopoiesis; required for normal numbers of hematopoietic stem cells in bone marrow. Promotes in vitro osteoblast proliferation and differentiation (By similarity). Promotes neurite extension, axon growth and axon guidance; axons grow preferentially on surfaces that contain ALCAM (By similarity). Mediates outgrowth and pathfinding for retinal ganglion cell axons (By similarity).</text>
</comment>
<comment type="subunit">
    <text evidence="2">Homodimer. Interacts (via extracellular domain) with CD6 (via extracellular domain). Homodimerization and interaction with CD6 involve the same region and cannot occur simultaneously. The affinity for CD6 is much higher than the affinity for self-association.</text>
</comment>
<comment type="subcellular location">
    <subcellularLocation>
        <location evidence="3">Cell membrane</location>
        <topology evidence="3">Single-pass type I membrane protein</topology>
    </subcellularLocation>
    <subcellularLocation>
        <location evidence="3">Cell projection</location>
        <location evidence="3">Axon</location>
    </subcellularLocation>
    <subcellularLocation>
        <location evidence="3">Cell projection</location>
        <location evidence="3">Dendrite</location>
    </subcellularLocation>
    <text evidence="2">Detected at the immunological synapse, i.e, at the contact zone between antigen-presenting dendritic cells and T-cells. Colocalizes with CD6 and the TCR/CD3 complex at the immunological synapse.</text>
</comment>
<comment type="tissue specificity">
    <text>Present on all retinal ganglion cells (RGCS) and their axons (in embryo). Absent from mature axons along most of their length, but is present on new and growing axons derived from the RGCS at the retinal margin. Remains on adult RGCS only at cell-cell contact sites and is continuously found in the retinal axon terminal arbor layers of the adult tectum.</text>
</comment>
<comment type="domain">
    <text evidence="2">The CD6 binding site is located in the N-terminal Ig-like domain.</text>
</comment>
<keyword id="KW-1064">Adaptive immunity</keyword>
<keyword id="KW-0130">Cell adhesion</keyword>
<keyword id="KW-1003">Cell membrane</keyword>
<keyword id="KW-0966">Cell projection</keyword>
<keyword id="KW-0217">Developmental protein</keyword>
<keyword id="KW-0903">Direct protein sequencing</keyword>
<keyword id="KW-1015">Disulfide bond</keyword>
<keyword id="KW-0325">Glycoprotein</keyword>
<keyword id="KW-0391">Immunity</keyword>
<keyword id="KW-0393">Immunoglobulin domain</keyword>
<keyword id="KW-0472">Membrane</keyword>
<keyword id="KW-1185">Reference proteome</keyword>
<keyword id="KW-0677">Repeat</keyword>
<keyword id="KW-0732">Signal</keyword>
<keyword id="KW-0812">Transmembrane</keyword>
<keyword id="KW-1133">Transmembrane helix</keyword>
<name>CD166_CARAU</name>
<dbReference type="EMBL" id="L25056">
    <property type="protein sequence ID" value="AAC38015.2"/>
    <property type="molecule type" value="mRNA"/>
</dbReference>
<dbReference type="PIR" id="I50478">
    <property type="entry name" value="I50478"/>
</dbReference>
<dbReference type="BMRB" id="Q90304"/>
<dbReference type="SMR" id="Q90304"/>
<dbReference type="GlyCosmos" id="Q90304">
    <property type="glycosylation" value="5 sites, No reported glycans"/>
</dbReference>
<dbReference type="Proteomes" id="UP000515129">
    <property type="component" value="Unplaced"/>
</dbReference>
<dbReference type="GO" id="GO:0030424">
    <property type="term" value="C:axon"/>
    <property type="evidence" value="ECO:0007669"/>
    <property type="project" value="UniProtKB-SubCell"/>
</dbReference>
<dbReference type="GO" id="GO:0030425">
    <property type="term" value="C:dendrite"/>
    <property type="evidence" value="ECO:0007669"/>
    <property type="project" value="UniProtKB-SubCell"/>
</dbReference>
<dbReference type="GO" id="GO:0005886">
    <property type="term" value="C:plasma membrane"/>
    <property type="evidence" value="ECO:0007669"/>
    <property type="project" value="UniProtKB-SubCell"/>
</dbReference>
<dbReference type="GO" id="GO:0002250">
    <property type="term" value="P:adaptive immune response"/>
    <property type="evidence" value="ECO:0007669"/>
    <property type="project" value="UniProtKB-KW"/>
</dbReference>
<dbReference type="GO" id="GO:0007155">
    <property type="term" value="P:cell adhesion"/>
    <property type="evidence" value="ECO:0007669"/>
    <property type="project" value="UniProtKB-KW"/>
</dbReference>
<dbReference type="Gene3D" id="2.60.40.10">
    <property type="entry name" value="Immunoglobulins"/>
    <property type="match status" value="4"/>
</dbReference>
<dbReference type="InterPro" id="IPR013162">
    <property type="entry name" value="CD80_C2-set"/>
</dbReference>
<dbReference type="InterPro" id="IPR007110">
    <property type="entry name" value="Ig-like_dom"/>
</dbReference>
<dbReference type="InterPro" id="IPR036179">
    <property type="entry name" value="Ig-like_dom_sf"/>
</dbReference>
<dbReference type="InterPro" id="IPR013783">
    <property type="entry name" value="Ig-like_fold"/>
</dbReference>
<dbReference type="InterPro" id="IPR003006">
    <property type="entry name" value="Ig/MHC_CS"/>
</dbReference>
<dbReference type="InterPro" id="IPR003599">
    <property type="entry name" value="Ig_sub"/>
</dbReference>
<dbReference type="InterPro" id="IPR003598">
    <property type="entry name" value="Ig_sub2"/>
</dbReference>
<dbReference type="InterPro" id="IPR013106">
    <property type="entry name" value="Ig_V-set"/>
</dbReference>
<dbReference type="InterPro" id="IPR051116">
    <property type="entry name" value="Surface_Rcpt/Adhesion_Mol"/>
</dbReference>
<dbReference type="PANTHER" id="PTHR11973:SF2">
    <property type="entry name" value="CD166 ANTIGEN"/>
    <property type="match status" value="1"/>
</dbReference>
<dbReference type="PANTHER" id="PTHR11973">
    <property type="entry name" value="CELL SURFACE GLYCOPROTEIN MUC18-RELATED"/>
    <property type="match status" value="1"/>
</dbReference>
<dbReference type="Pfam" id="PF08205">
    <property type="entry name" value="C2-set_2"/>
    <property type="match status" value="1"/>
</dbReference>
<dbReference type="Pfam" id="PF13895">
    <property type="entry name" value="Ig_2"/>
    <property type="match status" value="1"/>
</dbReference>
<dbReference type="Pfam" id="PF13927">
    <property type="entry name" value="Ig_3"/>
    <property type="match status" value="1"/>
</dbReference>
<dbReference type="SMART" id="SM00409">
    <property type="entry name" value="IG"/>
    <property type="match status" value="3"/>
</dbReference>
<dbReference type="SMART" id="SM00408">
    <property type="entry name" value="IGc2"/>
    <property type="match status" value="2"/>
</dbReference>
<dbReference type="SMART" id="SM00406">
    <property type="entry name" value="IGv"/>
    <property type="match status" value="1"/>
</dbReference>
<dbReference type="SUPFAM" id="SSF48726">
    <property type="entry name" value="Immunoglobulin"/>
    <property type="match status" value="4"/>
</dbReference>
<dbReference type="PROSITE" id="PS50835">
    <property type="entry name" value="IG_LIKE"/>
    <property type="match status" value="4"/>
</dbReference>
<dbReference type="PROSITE" id="PS00290">
    <property type="entry name" value="IG_MHC"/>
    <property type="match status" value="1"/>
</dbReference>
<organism>
    <name type="scientific">Carassius auratus</name>
    <name type="common">Goldfish</name>
    <dbReference type="NCBI Taxonomy" id="7957"/>
    <lineage>
        <taxon>Eukaryota</taxon>
        <taxon>Metazoa</taxon>
        <taxon>Chordata</taxon>
        <taxon>Craniata</taxon>
        <taxon>Vertebrata</taxon>
        <taxon>Euteleostomi</taxon>
        <taxon>Actinopterygii</taxon>
        <taxon>Neopterygii</taxon>
        <taxon>Teleostei</taxon>
        <taxon>Ostariophysi</taxon>
        <taxon>Cypriniformes</taxon>
        <taxon>Cyprinidae</taxon>
        <taxon>Cyprininae</taxon>
        <taxon>Carassius</taxon>
    </lineage>
</organism>